<dbReference type="EC" id="2.1.1.163" evidence="1"/>
<dbReference type="EMBL" id="AE017198">
    <property type="protein sequence ID" value="AAS08035.1"/>
    <property type="molecule type" value="Genomic_DNA"/>
</dbReference>
<dbReference type="SMR" id="Q74LY0"/>
<dbReference type="KEGG" id="ljo:LJ_0053"/>
<dbReference type="eggNOG" id="COG2226">
    <property type="taxonomic scope" value="Bacteria"/>
</dbReference>
<dbReference type="HOGENOM" id="CLU_037990_0_0_9"/>
<dbReference type="UniPathway" id="UPA00079">
    <property type="reaction ID" value="UER00169"/>
</dbReference>
<dbReference type="Proteomes" id="UP000000581">
    <property type="component" value="Chromosome"/>
</dbReference>
<dbReference type="GO" id="GO:0043770">
    <property type="term" value="F:demethylmenaquinone methyltransferase activity"/>
    <property type="evidence" value="ECO:0007669"/>
    <property type="project" value="UniProtKB-UniRule"/>
</dbReference>
<dbReference type="GO" id="GO:0009234">
    <property type="term" value="P:menaquinone biosynthetic process"/>
    <property type="evidence" value="ECO:0007669"/>
    <property type="project" value="UniProtKB-UniRule"/>
</dbReference>
<dbReference type="GO" id="GO:0032259">
    <property type="term" value="P:methylation"/>
    <property type="evidence" value="ECO:0007669"/>
    <property type="project" value="UniProtKB-KW"/>
</dbReference>
<dbReference type="CDD" id="cd02440">
    <property type="entry name" value="AdoMet_MTases"/>
    <property type="match status" value="1"/>
</dbReference>
<dbReference type="Gene3D" id="3.40.50.150">
    <property type="entry name" value="Vaccinia Virus protein VP39"/>
    <property type="match status" value="1"/>
</dbReference>
<dbReference type="HAMAP" id="MF_01813">
    <property type="entry name" value="MenG_UbiE_methyltr"/>
    <property type="match status" value="1"/>
</dbReference>
<dbReference type="InterPro" id="IPR029063">
    <property type="entry name" value="SAM-dependent_MTases_sf"/>
</dbReference>
<dbReference type="InterPro" id="IPR004033">
    <property type="entry name" value="UbiE/COQ5_MeTrFase"/>
</dbReference>
<dbReference type="InterPro" id="IPR023576">
    <property type="entry name" value="UbiE/COQ5_MeTrFase_CS"/>
</dbReference>
<dbReference type="NCBIfam" id="TIGR01934">
    <property type="entry name" value="MenG_MenH_UbiE"/>
    <property type="match status" value="1"/>
</dbReference>
<dbReference type="NCBIfam" id="NF001243">
    <property type="entry name" value="PRK00216.1-4"/>
    <property type="match status" value="1"/>
</dbReference>
<dbReference type="NCBIfam" id="NF001244">
    <property type="entry name" value="PRK00216.1-5"/>
    <property type="match status" value="1"/>
</dbReference>
<dbReference type="PANTHER" id="PTHR43591:SF24">
    <property type="entry name" value="2-METHOXY-6-POLYPRENYL-1,4-BENZOQUINOL METHYLASE, MITOCHONDRIAL"/>
    <property type="match status" value="1"/>
</dbReference>
<dbReference type="PANTHER" id="PTHR43591">
    <property type="entry name" value="METHYLTRANSFERASE"/>
    <property type="match status" value="1"/>
</dbReference>
<dbReference type="Pfam" id="PF01209">
    <property type="entry name" value="Ubie_methyltran"/>
    <property type="match status" value="1"/>
</dbReference>
<dbReference type="SUPFAM" id="SSF53335">
    <property type="entry name" value="S-adenosyl-L-methionine-dependent methyltransferases"/>
    <property type="match status" value="1"/>
</dbReference>
<dbReference type="PROSITE" id="PS51608">
    <property type="entry name" value="SAM_MT_UBIE"/>
    <property type="match status" value="1"/>
</dbReference>
<dbReference type="PROSITE" id="PS01183">
    <property type="entry name" value="UBIE_1"/>
    <property type="match status" value="1"/>
</dbReference>
<dbReference type="PROSITE" id="PS01184">
    <property type="entry name" value="UBIE_2"/>
    <property type="match status" value="1"/>
</dbReference>
<organism>
    <name type="scientific">Lactobacillus johnsonii (strain CNCM I-12250 / La1 / NCC 533)</name>
    <dbReference type="NCBI Taxonomy" id="257314"/>
    <lineage>
        <taxon>Bacteria</taxon>
        <taxon>Bacillati</taxon>
        <taxon>Bacillota</taxon>
        <taxon>Bacilli</taxon>
        <taxon>Lactobacillales</taxon>
        <taxon>Lactobacillaceae</taxon>
        <taxon>Lactobacillus</taxon>
    </lineage>
</organism>
<proteinExistence type="inferred from homology"/>
<protein>
    <recommendedName>
        <fullName evidence="1">Demethylmenaquinone methyltransferase</fullName>
        <ecNumber evidence="1">2.1.1.163</ecNumber>
    </recommendedName>
</protein>
<comment type="function">
    <text evidence="1">Methyltransferase required for the conversion of demethylmenaquinol (DMKH2) to menaquinol (MKH2).</text>
</comment>
<comment type="catalytic activity">
    <reaction evidence="1">
        <text>a 2-demethylmenaquinol + S-adenosyl-L-methionine = a menaquinol + S-adenosyl-L-homocysteine + H(+)</text>
        <dbReference type="Rhea" id="RHEA:42640"/>
        <dbReference type="Rhea" id="RHEA-COMP:9539"/>
        <dbReference type="Rhea" id="RHEA-COMP:9563"/>
        <dbReference type="ChEBI" id="CHEBI:15378"/>
        <dbReference type="ChEBI" id="CHEBI:18151"/>
        <dbReference type="ChEBI" id="CHEBI:55437"/>
        <dbReference type="ChEBI" id="CHEBI:57856"/>
        <dbReference type="ChEBI" id="CHEBI:59789"/>
        <dbReference type="EC" id="2.1.1.163"/>
    </reaction>
</comment>
<comment type="pathway">
    <text evidence="1">Quinol/quinone metabolism; menaquinone biosynthesis; menaquinol from 1,4-dihydroxy-2-naphthoate: step 2/2.</text>
</comment>
<comment type="similarity">
    <text evidence="1">Belongs to the class I-like SAM-binding methyltransferase superfamily. MenG/UbiE family.</text>
</comment>
<evidence type="ECO:0000255" key="1">
    <source>
        <dbReference type="HAMAP-Rule" id="MF_01813"/>
    </source>
</evidence>
<name>MENG_LACJO</name>
<accession>Q74LY0</accession>
<sequence>MVIKMSLTNKVPEKDVHDLFTRVAPHYDQMNNLISLGTQNGWRKKFFKKLKVKAGDFALDLCCGTGDLTIALAKQVGPSGNVIGLDFNQKMLDLADKKIRGQNLQKEIQLKQGDAMHLPYTDQSFDIVTIGFGLRNVPDADQVLKEIYRVLKPDGKVGILETSQPTNPIIKLGWESYFKLFPNFAKLLGANVDDYKYLSHTTAKFISATRLKEMLEQDGFKNVIITKLNLGAGAIHIGIKKKMR</sequence>
<reference key="1">
    <citation type="journal article" date="2004" name="Proc. Natl. Acad. Sci. U.S.A.">
        <title>The genome sequence of the probiotic intestinal bacterium Lactobacillus johnsonii NCC 533.</title>
        <authorList>
            <person name="Pridmore R.D."/>
            <person name="Berger B."/>
            <person name="Desiere F."/>
            <person name="Vilanova D."/>
            <person name="Barretto C."/>
            <person name="Pittet A.-C."/>
            <person name="Zwahlen M.-C."/>
            <person name="Rouvet M."/>
            <person name="Altermann E."/>
            <person name="Barrangou R."/>
            <person name="Mollet B."/>
            <person name="Mercenier A."/>
            <person name="Klaenhammer T."/>
            <person name="Arigoni F."/>
            <person name="Schell M.A."/>
        </authorList>
    </citation>
    <scope>NUCLEOTIDE SEQUENCE [LARGE SCALE GENOMIC DNA]</scope>
    <source>
        <strain>CNCM I-1225 / La1 / NCC 533</strain>
    </source>
</reference>
<feature type="chain" id="PRO_0000193283" description="Demethylmenaquinone methyltransferase">
    <location>
        <begin position="1"/>
        <end position="244"/>
    </location>
</feature>
<feature type="binding site" evidence="1">
    <location>
        <position position="65"/>
    </location>
    <ligand>
        <name>S-adenosyl-L-methionine</name>
        <dbReference type="ChEBI" id="CHEBI:59789"/>
    </ligand>
</feature>
<feature type="binding site" evidence="1">
    <location>
        <position position="86"/>
    </location>
    <ligand>
        <name>S-adenosyl-L-methionine</name>
        <dbReference type="ChEBI" id="CHEBI:59789"/>
    </ligand>
</feature>
<feature type="binding site" evidence="1">
    <location>
        <begin position="114"/>
        <end position="115"/>
    </location>
    <ligand>
        <name>S-adenosyl-L-methionine</name>
        <dbReference type="ChEBI" id="CHEBI:59789"/>
    </ligand>
</feature>
<gene>
    <name evidence="1" type="primary">menG</name>
    <name type="ordered locus">LJ_0053</name>
</gene>
<keyword id="KW-0474">Menaquinone biosynthesis</keyword>
<keyword id="KW-0489">Methyltransferase</keyword>
<keyword id="KW-0949">S-adenosyl-L-methionine</keyword>
<keyword id="KW-0808">Transferase</keyword>